<gene>
    <name evidence="5" type="primary">AMP2-3</name>
</gene>
<reference evidence="7 8" key="1">
    <citation type="journal article" date="1999" name="Plant J.">
        <title>A family of antimicrobial peptides is produced by processing of a 7S globulin protein in Macadamia integrifolia kernels.</title>
        <authorList>
            <person name="Marcus J.P."/>
            <person name="Green J.L."/>
            <person name="Goulter K.C."/>
            <person name="Manners J.M."/>
        </authorList>
    </citation>
    <scope>NUCLEOTIDE SEQUENCE [MRNA]</scope>
    <scope>PROTEIN SEQUENCE OF 36-41; 77-82 AND 145-149</scope>
    <scope>FUNCTION</scope>
    <scope>SUBCELLULAR LOCATION</scope>
    <scope>MASS SPECTROMETRY</scope>
    <source>
        <tissue evidence="8">Kernel</tissue>
    </source>
</reference>
<reference key="2">
    <citation type="journal article" date="2022" name="Food Chem.">
        <title>Identification of vicilin, legumin and antimicrobial peptide 2a as macadamia nut allergens.</title>
        <authorList>
            <person name="Kabasser S."/>
            <person name="Pratap K."/>
            <person name="Kamath S."/>
            <person name="Taki A.C."/>
            <person name="Dang T."/>
            <person name="Koplin J."/>
            <person name="Perrett K."/>
            <person name="Hummel K."/>
            <person name="Radauer C."/>
            <person name="Breiteneder H."/>
            <person name="Lopata A.L."/>
            <person name="Bublin M."/>
        </authorList>
    </citation>
    <scope>IDENTIFICATION BY MASS SPECTROMETRY</scope>
    <scope>FUNCTION</scope>
    <scope>ALLERGEN</scope>
    <source>
        <tissue evidence="6">Seed</tissue>
    </source>
</reference>
<evidence type="ECO:0000255" key="1"/>
<evidence type="ECO:0000256" key="2">
    <source>
        <dbReference type="SAM" id="MobiDB-lite"/>
    </source>
</evidence>
<evidence type="ECO:0000269" key="3">
    <source>
    </source>
</evidence>
<evidence type="ECO:0000269" key="4">
    <source>
    </source>
</evidence>
<evidence type="ECO:0000303" key="5">
    <source>
    </source>
</evidence>
<evidence type="ECO:0000303" key="6">
    <source>
    </source>
</evidence>
<evidence type="ECO:0000305" key="7"/>
<evidence type="ECO:0000312" key="8">
    <source>
        <dbReference type="EMBL" id="AAD54246.1"/>
    </source>
</evidence>
<feature type="chain" id="PRO_0000250402" description="Vicilin-like antimicrobial peptides 2-3">
    <location>
        <begin position="1" status="less than"/>
        <end position="625"/>
    </location>
</feature>
<feature type="peptide" id="PRO_0000250403" description="Antimicrobial peptide 2a" evidence="1 5">
    <location>
        <begin position="1" status="less than"/>
        <end position="35"/>
    </location>
</feature>
<feature type="peptide" id="PRO_0000250404" description="Antimicrobial peptide 2b" evidence="3">
    <location>
        <begin position="36"/>
        <end position="76"/>
    </location>
</feature>
<feature type="peptide" id="PRO_0000250405" description="Antimicrobial peptide 2c-3" evidence="3">
    <location>
        <begin position="77"/>
        <end position="143"/>
    </location>
</feature>
<feature type="peptide" id="PRO_0000250406" description="Antimicrobial peptide 2c-2" evidence="3">
    <location>
        <begin position="77"/>
        <end position="123"/>
    </location>
</feature>
<feature type="peptide" id="PRO_0000250407" description="Antimicrobial peptide 2c-1" evidence="3">
    <location>
        <begin position="77"/>
        <end position="121"/>
    </location>
</feature>
<feature type="peptide" id="PRO_0000250408" description="Antimicrobial peptide 2d" evidence="3">
    <location>
        <begin position="145"/>
        <end position="179"/>
    </location>
</feature>
<feature type="domain" description="Cupin type-1 1" evidence="1">
    <location>
        <begin position="230"/>
        <end position="369"/>
    </location>
</feature>
<feature type="domain" description="Cupin type-1 2" evidence="1">
    <location>
        <begin position="414"/>
        <end position="584"/>
    </location>
</feature>
<feature type="region of interest" description="Disordered" evidence="2">
    <location>
        <begin position="120"/>
        <end position="152"/>
    </location>
</feature>
<feature type="region of interest" description="Disordered" evidence="2">
    <location>
        <begin position="180"/>
        <end position="212"/>
    </location>
</feature>
<feature type="region of interest" description="Disordered" evidence="2">
    <location>
        <begin position="594"/>
        <end position="614"/>
    </location>
</feature>
<feature type="compositionally biased region" description="Basic and acidic residues" evidence="2">
    <location>
        <begin position="198"/>
        <end position="212"/>
    </location>
</feature>
<feature type="compositionally biased region" description="Low complexity" evidence="2">
    <location>
        <begin position="601"/>
        <end position="614"/>
    </location>
</feature>
<feature type="non-terminal residue" evidence="8">
    <location>
        <position position="1"/>
    </location>
</feature>
<comment type="function">
    <text evidence="3">Antimicrobial peptides 2b, 2c and 2d have antibacterial and antifungal activity against a range of species.</text>
</comment>
<comment type="subcellular location">
    <subcellularLocation>
        <location evidence="3">Secreted</location>
    </subcellularLocation>
</comment>
<comment type="mass spectrometry" mass="5139.0" method="Unknown" evidence="3">
    <molecule>Antimicrobial peptide 2b</molecule>
</comment>
<comment type="mass spectrometry" mass="5931.0" method="Unknown" evidence="3">
    <molecule>Antimicrobial peptide 2c-1</molecule>
</comment>
<comment type="mass spectrometry" mass="6216.0" method="Unknown" evidence="3">
    <molecule>Antimicrobial peptide 2c-2</molecule>
</comment>
<comment type="mass spectrometry" mass="8818.0" method="Unknown" evidence="3">
    <molecule>Antimicrobial peptide 2c-3</molecule>
</comment>
<comment type="mass spectrometry" mass="4576.0" method="Unknown" evidence="3">
    <molecule>Antimicrobial peptide 2d</molecule>
</comment>
<comment type="allergen">
    <text evidence="4">Causes an allergic reaction in human (PubMed:34525424). Binds to IgE in 80% of 5 patients allergic to macadamia nut (PubMed:34525424). Binds to IgE in 25% of 8 macadamia nut sensitized but clinically tolerant patients (PubMed:34525424). Also weakly binds to IgE in 7% of the 14 patients tested, that are allergic to peanut and/or tree nut but tolerant and not-sensitized to macadamia nut (PubMed:34525424).</text>
</comment>
<comment type="similarity">
    <text evidence="1">Belongs to the 7S seed storage protein family.</text>
</comment>
<name>AMP23_MACIN</name>
<protein>
    <recommendedName>
        <fullName>Vicilin-like antimicrobial peptides 2-3</fullName>
    </recommendedName>
    <alternativeName>
        <fullName>MiAMP2</fullName>
    </alternativeName>
    <alternativeName>
        <fullName evidence="5">Vicilin-like protein Mac i 1</fullName>
    </alternativeName>
    <allergenName evidence="6">Mac i 1.0101</allergenName>
    <component>
        <recommendedName>
            <fullName>Antimicrobial peptide 2a</fullName>
        </recommendedName>
        <alternativeName>
            <fullName>MiAMP2a</fullName>
        </alternativeName>
    </component>
    <component>
        <recommendedName>
            <fullName>Antimicrobial peptide 2b</fullName>
        </recommendedName>
        <alternativeName>
            <fullName>MiAMP2b</fullName>
        </alternativeName>
    </component>
    <component>
        <recommendedName>
            <fullName>Antimicrobial peptide 2c-1</fullName>
        </recommendedName>
        <alternativeName>
            <fullName>MiAMP2c-1</fullName>
        </alternativeName>
    </component>
    <component>
        <recommendedName>
            <fullName>Antimicrobial peptide 2c-2</fullName>
        </recommendedName>
        <alternativeName>
            <fullName>MiAMP2c-2</fullName>
        </alternativeName>
    </component>
    <component>
        <recommendedName>
            <fullName>Antimicrobial peptide 2c-3</fullName>
        </recommendedName>
        <alternativeName>
            <fullName>MiAMP2c-3</fullName>
        </alternativeName>
    </component>
    <component>
        <recommendedName>
            <fullName>Antimicrobial peptide 2d</fullName>
        </recommendedName>
        <alternativeName>
            <fullName>MiAMP2d</fullName>
        </alternativeName>
    </component>
</protein>
<keyword id="KW-0020">Allergen</keyword>
<keyword id="KW-0044">Antibiotic</keyword>
<keyword id="KW-0929">Antimicrobial</keyword>
<keyword id="KW-0903">Direct protein sequencing</keyword>
<keyword id="KW-0295">Fungicide</keyword>
<keyword id="KW-0389">IgE-binding protein</keyword>
<keyword id="KW-0611">Plant defense</keyword>
<keyword id="KW-0964">Secreted</keyword>
<keyword id="KW-0708">Seed storage protein</keyword>
<keyword id="KW-0758">Storage protein</keyword>
<accession>Q9SPL3</accession>
<organism>
    <name type="scientific">Macadamia integrifolia</name>
    <name type="common">Macadamia nut</name>
    <dbReference type="NCBI Taxonomy" id="60698"/>
    <lineage>
        <taxon>Eukaryota</taxon>
        <taxon>Viridiplantae</taxon>
        <taxon>Streptophyta</taxon>
        <taxon>Embryophyta</taxon>
        <taxon>Tracheophyta</taxon>
        <taxon>Spermatophyta</taxon>
        <taxon>Magnoliopsida</taxon>
        <taxon>Proteales</taxon>
        <taxon>Proteaceae</taxon>
        <taxon>Macadamia</taxon>
    </lineage>
</organism>
<dbReference type="EMBL" id="AF161885">
    <property type="protein sequence ID" value="AAD54246.1"/>
    <property type="molecule type" value="mRNA"/>
</dbReference>
<dbReference type="SMR" id="Q9SPL3"/>
<dbReference type="GO" id="GO:0043245">
    <property type="term" value="C:extraorganismal space"/>
    <property type="evidence" value="ECO:0000303"/>
    <property type="project" value="UniProtKB"/>
</dbReference>
<dbReference type="GO" id="GO:0019863">
    <property type="term" value="F:IgE binding"/>
    <property type="evidence" value="ECO:0000314"/>
    <property type="project" value="UniProtKB"/>
</dbReference>
<dbReference type="GO" id="GO:0045735">
    <property type="term" value="F:nutrient reservoir activity"/>
    <property type="evidence" value="ECO:0000303"/>
    <property type="project" value="UniProtKB"/>
</dbReference>
<dbReference type="GO" id="GO:0042742">
    <property type="term" value="P:defense response to bacterium"/>
    <property type="evidence" value="ECO:0007669"/>
    <property type="project" value="UniProtKB-KW"/>
</dbReference>
<dbReference type="GO" id="GO:0050832">
    <property type="term" value="P:defense response to fungus"/>
    <property type="evidence" value="ECO:0000314"/>
    <property type="project" value="UniProtKB"/>
</dbReference>
<dbReference type="GO" id="GO:0031640">
    <property type="term" value="P:killing of cells of another organism"/>
    <property type="evidence" value="ECO:0007669"/>
    <property type="project" value="UniProtKB-KW"/>
</dbReference>
<dbReference type="CDD" id="cd02245">
    <property type="entry name" value="cupin_7S_vicilin-like_C"/>
    <property type="match status" value="1"/>
</dbReference>
<dbReference type="CDD" id="cd02244">
    <property type="entry name" value="cupin_7S_vicilin-like_N"/>
    <property type="match status" value="1"/>
</dbReference>
<dbReference type="FunFam" id="2.60.120.10:FF:000145">
    <property type="entry name" value="Vicilin-like antimicrobial peptides 2-2"/>
    <property type="match status" value="1"/>
</dbReference>
<dbReference type="FunFam" id="2.60.120.10:FF:000173">
    <property type="entry name" value="Vicilin-like antimicrobial peptides 2-3"/>
    <property type="match status" value="1"/>
</dbReference>
<dbReference type="Gene3D" id="6.10.250.890">
    <property type="match status" value="1"/>
</dbReference>
<dbReference type="Gene3D" id="2.60.120.10">
    <property type="entry name" value="Jelly Rolls"/>
    <property type="match status" value="2"/>
</dbReference>
<dbReference type="InterPro" id="IPR006045">
    <property type="entry name" value="Cupin_1"/>
</dbReference>
<dbReference type="InterPro" id="IPR014710">
    <property type="entry name" value="RmlC-like_jellyroll"/>
</dbReference>
<dbReference type="InterPro" id="IPR011051">
    <property type="entry name" value="RmlC_Cupin_sf"/>
</dbReference>
<dbReference type="InterPro" id="IPR050253">
    <property type="entry name" value="Seed_Storage-Functional"/>
</dbReference>
<dbReference type="InterPro" id="IPR006792">
    <property type="entry name" value="Vicilin_N"/>
</dbReference>
<dbReference type="PANTHER" id="PTHR31189:SF13">
    <property type="entry name" value="CUPINCIN"/>
    <property type="match status" value="1"/>
</dbReference>
<dbReference type="PANTHER" id="PTHR31189">
    <property type="entry name" value="OS03G0336100 PROTEIN-RELATED"/>
    <property type="match status" value="1"/>
</dbReference>
<dbReference type="Pfam" id="PF00190">
    <property type="entry name" value="Cupin_1"/>
    <property type="match status" value="2"/>
</dbReference>
<dbReference type="Pfam" id="PF04702">
    <property type="entry name" value="Vicilin_N"/>
    <property type="match status" value="2"/>
</dbReference>
<dbReference type="SMART" id="SM00835">
    <property type="entry name" value="Cupin_1"/>
    <property type="match status" value="2"/>
</dbReference>
<dbReference type="SUPFAM" id="SSF51182">
    <property type="entry name" value="RmlC-like cupins"/>
    <property type="match status" value="2"/>
</dbReference>
<sequence length="625" mass="73587">QCMQLETSGQMRRCVSQCDKRFEEDIDWSKYDNQEDPQTECQQCQRRCRQQESDPRQQQYCQRRCKEICEEEEEYNRQRDPQQQYEQCQKRCQRRETEPRHMQICQQRCERRYEKEKRKQQKRYEEQQREDEEKYEERMKEGDNKRDPQQREYEDCRRHCEQQEPRLQYQCQRRCQEQQRQHGRGGDLMNPQRGGSGRYEEGEEKQSDNPYYFDERSLSTRFRTEEGHISVLENFYGRSKLLRALKNYRLVLLEANPNAFVLPTHLDADAILLVIGGRGALKMIHRDNRESYNLECGDVIRIPAGTTFYLINRDNNERLHIAKFLQTISTPGQYKEFFPAGGQNPEPYLSTFSKEILEAALNTQTERLRGVLGQQREGVIIRASQEQIRELTRDDSESRRWHIRRGGESSRGPYNLFNKRPLYSNKYGQAYEVKPEDYRQLQDMDVSVFIANITQGSMMGPFFNTRSTKVVVVASGEADVEMACPHLSGRHGGRGGGKRHEEEEEVHYEQVRARLSKREAIVVLAGHPVVFVSSGNENLLLFAFGINAQNNHENFLAGRERNVLQQIEPQAMELAFAASRKEVEELFNSQDESIFFPGPRQHQQQSPRSTKQQQPLVSILDFVGF</sequence>
<proteinExistence type="evidence at protein level"/>